<dbReference type="EC" id="3.1.26.4" evidence="1"/>
<dbReference type="EMBL" id="AL157959">
    <property type="protein sequence ID" value="CAM08938.1"/>
    <property type="molecule type" value="Genomic_DNA"/>
</dbReference>
<dbReference type="PIR" id="F81807">
    <property type="entry name" value="F81807"/>
</dbReference>
<dbReference type="RefSeq" id="WP_002212768.1">
    <property type="nucleotide sequence ID" value="NC_003116.1"/>
</dbReference>
<dbReference type="SMR" id="Q9JTD9"/>
<dbReference type="EnsemblBacteria" id="CAM08938">
    <property type="protein sequence ID" value="CAM08938"/>
    <property type="gene ID" value="NMA1817"/>
</dbReference>
<dbReference type="KEGG" id="nma:NMA1817"/>
<dbReference type="HOGENOM" id="CLU_030894_6_0_4"/>
<dbReference type="Proteomes" id="UP000000626">
    <property type="component" value="Chromosome"/>
</dbReference>
<dbReference type="GO" id="GO:0005737">
    <property type="term" value="C:cytoplasm"/>
    <property type="evidence" value="ECO:0007669"/>
    <property type="project" value="UniProtKB-SubCell"/>
</dbReference>
<dbReference type="GO" id="GO:0000287">
    <property type="term" value="F:magnesium ion binding"/>
    <property type="evidence" value="ECO:0007669"/>
    <property type="project" value="UniProtKB-UniRule"/>
</dbReference>
<dbReference type="GO" id="GO:0003676">
    <property type="term" value="F:nucleic acid binding"/>
    <property type="evidence" value="ECO:0007669"/>
    <property type="project" value="InterPro"/>
</dbReference>
<dbReference type="GO" id="GO:0004523">
    <property type="term" value="F:RNA-DNA hybrid ribonuclease activity"/>
    <property type="evidence" value="ECO:0007669"/>
    <property type="project" value="UniProtKB-UniRule"/>
</dbReference>
<dbReference type="GO" id="GO:0043137">
    <property type="term" value="P:DNA replication, removal of RNA primer"/>
    <property type="evidence" value="ECO:0007669"/>
    <property type="project" value="TreeGrafter"/>
</dbReference>
<dbReference type="CDD" id="cd09278">
    <property type="entry name" value="RNase_HI_prokaryote_like"/>
    <property type="match status" value="1"/>
</dbReference>
<dbReference type="FunFam" id="3.30.420.10:FF:000008">
    <property type="entry name" value="Ribonuclease H"/>
    <property type="match status" value="1"/>
</dbReference>
<dbReference type="Gene3D" id="3.30.420.10">
    <property type="entry name" value="Ribonuclease H-like superfamily/Ribonuclease H"/>
    <property type="match status" value="1"/>
</dbReference>
<dbReference type="HAMAP" id="MF_00042">
    <property type="entry name" value="RNase_H"/>
    <property type="match status" value="1"/>
</dbReference>
<dbReference type="InterPro" id="IPR050092">
    <property type="entry name" value="RNase_H"/>
</dbReference>
<dbReference type="InterPro" id="IPR012337">
    <property type="entry name" value="RNaseH-like_sf"/>
</dbReference>
<dbReference type="InterPro" id="IPR002156">
    <property type="entry name" value="RNaseH_domain"/>
</dbReference>
<dbReference type="InterPro" id="IPR036397">
    <property type="entry name" value="RNaseH_sf"/>
</dbReference>
<dbReference type="InterPro" id="IPR022892">
    <property type="entry name" value="RNaseHI"/>
</dbReference>
<dbReference type="NCBIfam" id="NF001236">
    <property type="entry name" value="PRK00203.1"/>
    <property type="match status" value="1"/>
</dbReference>
<dbReference type="PANTHER" id="PTHR10642">
    <property type="entry name" value="RIBONUCLEASE H1"/>
    <property type="match status" value="1"/>
</dbReference>
<dbReference type="PANTHER" id="PTHR10642:SF26">
    <property type="entry name" value="RIBONUCLEASE H1"/>
    <property type="match status" value="1"/>
</dbReference>
<dbReference type="Pfam" id="PF00075">
    <property type="entry name" value="RNase_H"/>
    <property type="match status" value="1"/>
</dbReference>
<dbReference type="SUPFAM" id="SSF53098">
    <property type="entry name" value="Ribonuclease H-like"/>
    <property type="match status" value="1"/>
</dbReference>
<dbReference type="PROSITE" id="PS50879">
    <property type="entry name" value="RNASE_H_1"/>
    <property type="match status" value="1"/>
</dbReference>
<feature type="chain" id="PRO_0000195384" description="Ribonuclease HI">
    <location>
        <begin position="1"/>
        <end position="145"/>
    </location>
</feature>
<feature type="domain" description="RNase H type-1" evidence="2">
    <location>
        <begin position="1"/>
        <end position="142"/>
    </location>
</feature>
<feature type="binding site" evidence="1">
    <location>
        <position position="10"/>
    </location>
    <ligand>
        <name>Mg(2+)</name>
        <dbReference type="ChEBI" id="CHEBI:18420"/>
        <label>1</label>
    </ligand>
</feature>
<feature type="binding site" evidence="1">
    <location>
        <position position="10"/>
    </location>
    <ligand>
        <name>Mg(2+)</name>
        <dbReference type="ChEBI" id="CHEBI:18420"/>
        <label>2</label>
    </ligand>
</feature>
<feature type="binding site" evidence="1">
    <location>
        <position position="48"/>
    </location>
    <ligand>
        <name>Mg(2+)</name>
        <dbReference type="ChEBI" id="CHEBI:18420"/>
        <label>1</label>
    </ligand>
</feature>
<feature type="binding site" evidence="1">
    <location>
        <position position="70"/>
    </location>
    <ligand>
        <name>Mg(2+)</name>
        <dbReference type="ChEBI" id="CHEBI:18420"/>
        <label>1</label>
    </ligand>
</feature>
<feature type="binding site" evidence="1">
    <location>
        <position position="134"/>
    </location>
    <ligand>
        <name>Mg(2+)</name>
        <dbReference type="ChEBI" id="CHEBI:18420"/>
        <label>2</label>
    </ligand>
</feature>
<sequence>MNQTVYLYTDGACKGNPGAGGWGVLMRYGSHEKELFGGEAQTTNNRMELTAVIEGLKSLKRRCTVIICTDSQYVKNGMENWIHGWKRNGWKTAAKQPVKNDDLWKELDALVGRHQVSWTWVKGHAGHAENERADDLANRGAAQFS</sequence>
<proteinExistence type="inferred from homology"/>
<evidence type="ECO:0000255" key="1">
    <source>
        <dbReference type="HAMAP-Rule" id="MF_00042"/>
    </source>
</evidence>
<evidence type="ECO:0000255" key="2">
    <source>
        <dbReference type="PROSITE-ProRule" id="PRU00408"/>
    </source>
</evidence>
<protein>
    <recommendedName>
        <fullName evidence="1">Ribonuclease HI</fullName>
        <shortName evidence="1">RNase HI</shortName>
        <ecNumber evidence="1">3.1.26.4</ecNumber>
    </recommendedName>
</protein>
<comment type="function">
    <text evidence="1">Endonuclease that specifically degrades the RNA of RNA-DNA hybrids.</text>
</comment>
<comment type="catalytic activity">
    <reaction evidence="1">
        <text>Endonucleolytic cleavage to 5'-phosphomonoester.</text>
        <dbReference type="EC" id="3.1.26.4"/>
    </reaction>
</comment>
<comment type="cofactor">
    <cofactor evidence="1">
        <name>Mg(2+)</name>
        <dbReference type="ChEBI" id="CHEBI:18420"/>
    </cofactor>
    <text evidence="1">Binds 1 Mg(2+) ion per subunit. May bind a second metal ion at a regulatory site, or after substrate binding.</text>
</comment>
<comment type="subunit">
    <text evidence="1">Monomer.</text>
</comment>
<comment type="subcellular location">
    <subcellularLocation>
        <location evidence="1">Cytoplasm</location>
    </subcellularLocation>
</comment>
<comment type="similarity">
    <text evidence="1">Belongs to the RNase H family.</text>
</comment>
<gene>
    <name evidence="1" type="primary">rnhA</name>
    <name type="ordered locus">NMA1817</name>
</gene>
<name>RNH_NEIMA</name>
<organism>
    <name type="scientific">Neisseria meningitidis serogroup A / serotype 4A (strain DSM 15465 / Z2491)</name>
    <dbReference type="NCBI Taxonomy" id="122587"/>
    <lineage>
        <taxon>Bacteria</taxon>
        <taxon>Pseudomonadati</taxon>
        <taxon>Pseudomonadota</taxon>
        <taxon>Betaproteobacteria</taxon>
        <taxon>Neisseriales</taxon>
        <taxon>Neisseriaceae</taxon>
        <taxon>Neisseria</taxon>
    </lineage>
</organism>
<accession>Q9JTD9</accession>
<accession>A1IT26</accession>
<keyword id="KW-0963">Cytoplasm</keyword>
<keyword id="KW-0255">Endonuclease</keyword>
<keyword id="KW-0378">Hydrolase</keyword>
<keyword id="KW-0460">Magnesium</keyword>
<keyword id="KW-0479">Metal-binding</keyword>
<keyword id="KW-0540">Nuclease</keyword>
<reference key="1">
    <citation type="journal article" date="2000" name="Nature">
        <title>Complete DNA sequence of a serogroup A strain of Neisseria meningitidis Z2491.</title>
        <authorList>
            <person name="Parkhill J."/>
            <person name="Achtman M."/>
            <person name="James K.D."/>
            <person name="Bentley S.D."/>
            <person name="Churcher C.M."/>
            <person name="Klee S.R."/>
            <person name="Morelli G."/>
            <person name="Basham D."/>
            <person name="Brown D."/>
            <person name="Chillingworth T."/>
            <person name="Davies R.M."/>
            <person name="Davis P."/>
            <person name="Devlin K."/>
            <person name="Feltwell T."/>
            <person name="Hamlin N."/>
            <person name="Holroyd S."/>
            <person name="Jagels K."/>
            <person name="Leather S."/>
            <person name="Moule S."/>
            <person name="Mungall K.L."/>
            <person name="Quail M.A."/>
            <person name="Rajandream M.A."/>
            <person name="Rutherford K.M."/>
            <person name="Simmonds M."/>
            <person name="Skelton J."/>
            <person name="Whitehead S."/>
            <person name="Spratt B.G."/>
            <person name="Barrell B.G."/>
        </authorList>
    </citation>
    <scope>NUCLEOTIDE SEQUENCE [LARGE SCALE GENOMIC DNA]</scope>
    <source>
        <strain>DSM 15465 / Z2491</strain>
    </source>
</reference>